<protein>
    <recommendedName>
        <fullName evidence="1">Ribonuclease P protein component</fullName>
        <shortName evidence="1">RNase P protein</shortName>
        <shortName evidence="1">RNaseP protein</shortName>
        <ecNumber evidence="1">3.1.26.5</ecNumber>
    </recommendedName>
    <alternativeName>
        <fullName evidence="1">Protein C5</fullName>
    </alternativeName>
</protein>
<feature type="chain" id="PRO_0000198553" description="Ribonuclease P protein component">
    <location>
        <begin position="1"/>
        <end position="162"/>
    </location>
</feature>
<feature type="region of interest" description="Disordered" evidence="2">
    <location>
        <begin position="1"/>
        <end position="67"/>
    </location>
</feature>
<feature type="compositionally biased region" description="Basic and acidic residues" evidence="2">
    <location>
        <begin position="21"/>
        <end position="31"/>
    </location>
</feature>
<comment type="function">
    <text evidence="1">RNaseP catalyzes the removal of the 5'-leader sequence from pre-tRNA to produce the mature 5'-terminus. It can also cleave other RNA substrates such as 4.5S RNA. The protein component plays an auxiliary but essential role in vivo by binding to the 5'-leader sequence and broadening the substrate specificity of the ribozyme.</text>
</comment>
<comment type="catalytic activity">
    <reaction evidence="1">
        <text>Endonucleolytic cleavage of RNA, removing 5'-extranucleotides from tRNA precursor.</text>
        <dbReference type="EC" id="3.1.26.5"/>
    </reaction>
</comment>
<comment type="subunit">
    <text evidence="1">Consists of a catalytic RNA component (M1 or rnpB) and a protein subunit.</text>
</comment>
<comment type="miscellaneous">
    <text>The open reading frame (ORF) for this protein entirely encompasses the ORF for the 50S ribosomal protein L34 (rpmH). The two start codons are separated by four nucleotides.</text>
</comment>
<comment type="similarity">
    <text evidence="1">Belongs to the RnpA family.</text>
</comment>
<evidence type="ECO:0000255" key="1">
    <source>
        <dbReference type="HAMAP-Rule" id="MF_00227"/>
    </source>
</evidence>
<evidence type="ECO:0000256" key="2">
    <source>
        <dbReference type="SAM" id="MobiDB-lite"/>
    </source>
</evidence>
<dbReference type="EC" id="3.1.26.5" evidence="1"/>
<dbReference type="EMBL" id="AY256337">
    <property type="protein sequence ID" value="AAO88967.1"/>
    <property type="molecule type" value="Genomic_DNA"/>
</dbReference>
<dbReference type="SMR" id="Q7X5L6"/>
<dbReference type="STRING" id="56956.A0O31_01777"/>
<dbReference type="GO" id="GO:0030677">
    <property type="term" value="C:ribonuclease P complex"/>
    <property type="evidence" value="ECO:0007669"/>
    <property type="project" value="TreeGrafter"/>
</dbReference>
<dbReference type="GO" id="GO:0042781">
    <property type="term" value="F:3'-tRNA processing endoribonuclease activity"/>
    <property type="evidence" value="ECO:0007669"/>
    <property type="project" value="TreeGrafter"/>
</dbReference>
<dbReference type="GO" id="GO:0004526">
    <property type="term" value="F:ribonuclease P activity"/>
    <property type="evidence" value="ECO:0007669"/>
    <property type="project" value="UniProtKB-UniRule"/>
</dbReference>
<dbReference type="GO" id="GO:0000049">
    <property type="term" value="F:tRNA binding"/>
    <property type="evidence" value="ECO:0007669"/>
    <property type="project" value="UniProtKB-UniRule"/>
</dbReference>
<dbReference type="GO" id="GO:0001682">
    <property type="term" value="P:tRNA 5'-leader removal"/>
    <property type="evidence" value="ECO:0007669"/>
    <property type="project" value="UniProtKB-UniRule"/>
</dbReference>
<dbReference type="Gene3D" id="3.30.230.10">
    <property type="match status" value="1"/>
</dbReference>
<dbReference type="HAMAP" id="MF_00227">
    <property type="entry name" value="RNase_P"/>
    <property type="match status" value="1"/>
</dbReference>
<dbReference type="InterPro" id="IPR020568">
    <property type="entry name" value="Ribosomal_Su5_D2-typ_SF"/>
</dbReference>
<dbReference type="InterPro" id="IPR014721">
    <property type="entry name" value="Ribsml_uS5_D2-typ_fold_subgr"/>
</dbReference>
<dbReference type="InterPro" id="IPR000100">
    <property type="entry name" value="RNase_P"/>
</dbReference>
<dbReference type="InterPro" id="IPR020539">
    <property type="entry name" value="RNase_P_CS"/>
</dbReference>
<dbReference type="NCBIfam" id="TIGR00188">
    <property type="entry name" value="rnpA"/>
    <property type="match status" value="1"/>
</dbReference>
<dbReference type="PANTHER" id="PTHR33992">
    <property type="entry name" value="RIBONUCLEASE P PROTEIN COMPONENT"/>
    <property type="match status" value="1"/>
</dbReference>
<dbReference type="PANTHER" id="PTHR33992:SF1">
    <property type="entry name" value="RIBONUCLEASE P PROTEIN COMPONENT"/>
    <property type="match status" value="1"/>
</dbReference>
<dbReference type="Pfam" id="PF00825">
    <property type="entry name" value="Ribonuclease_P"/>
    <property type="match status" value="1"/>
</dbReference>
<dbReference type="SUPFAM" id="SSF54211">
    <property type="entry name" value="Ribosomal protein S5 domain 2-like"/>
    <property type="match status" value="1"/>
</dbReference>
<dbReference type="PROSITE" id="PS00648">
    <property type="entry name" value="RIBONUCLEASE_P"/>
    <property type="match status" value="1"/>
</dbReference>
<reference key="1">
    <citation type="journal article" date="2003" name="Proc. Natl. Acad. Sci. U.S.A.">
        <title>An unusual mechanism of bacterial gene expression revealed for the RNase P protein of Thermus strains.</title>
        <authorList>
            <person name="Feltens R."/>
            <person name="Gossringer M."/>
            <person name="Willkomm D.K."/>
            <person name="Urlaub H."/>
            <person name="Hartmann R.K."/>
        </authorList>
    </citation>
    <scope>NUCLEOTIDE SEQUENCE [GENOMIC DNA]</scope>
    <source>
        <strain>JCM 11602 / BCRC 17272 / NBRC 110747 / NCIMB 12676 / YS38</strain>
    </source>
</reference>
<proteinExistence type="inferred from homology"/>
<gene>
    <name evidence="1" type="primary">rnpA</name>
</gene>
<accession>Q7X5L6</accession>
<organism>
    <name type="scientific">Thermus brockianus</name>
    <dbReference type="NCBI Taxonomy" id="56956"/>
    <lineage>
        <taxon>Bacteria</taxon>
        <taxon>Thermotogati</taxon>
        <taxon>Deinococcota</taxon>
        <taxon>Deinococci</taxon>
        <taxon>Thermales</taxon>
        <taxon>Thermaceae</taxon>
        <taxon>Thermus</taxon>
    </lineage>
</organism>
<sequence length="162" mass="17867">MDEKDLAAQPEEAGQDPRLPGPHEDPRRQEGAEAQAAEGPLAPHAQGERLKRPPPAPGGKLVSLKGDRAFQRLRKGKAGRGRYVSVKWLPAPELRVGIVVSKKVGKAVVRNKVKRRLREILRRLHLPKAHLLVVASPEAREASYVELFQDVARALKKSGLIQ</sequence>
<name>RNPA_THEBO</name>
<keyword id="KW-0255">Endonuclease</keyword>
<keyword id="KW-0378">Hydrolase</keyword>
<keyword id="KW-0540">Nuclease</keyword>
<keyword id="KW-0694">RNA-binding</keyword>
<keyword id="KW-0819">tRNA processing</keyword>